<protein>
    <recommendedName>
        <fullName>Zinc metalloproteinase-disintegrin-like AAV1</fullName>
        <ecNumber>3.4.24.-</ecNumber>
    </recommendedName>
    <alternativeName>
        <fullName>Snake venom metalloproteinase</fullName>
        <shortName>SVMP</shortName>
    </alternativeName>
    <component>
        <recommendedName>
            <fullName>Disintegrin-like AAV1-C</fullName>
        </recommendedName>
    </component>
</protein>
<reference key="1">
    <citation type="journal article" date="2007" name="Biochimie">
        <title>Purification and functional characterization of AAV1, a novel P-III metalloproteinase, from Formosan Agkistrodon acutus venom.</title>
        <authorList>
            <person name="Wang W.J."/>
        </authorList>
    </citation>
    <scope>PROTEIN SEQUENCE</scope>
    <scope>FUNCTION</scope>
    <scope>ACTIVITY REGULATION</scope>
    <scope>SUBUNIT</scope>
    <scope>SUBCELLULAR LOCATION</scope>
    <source>
        <tissue>Venom</tissue>
    </source>
</reference>
<sequence length="10" mass="986">DVVSPPVCGN</sequence>
<proteinExistence type="evidence at protein level"/>
<comment type="function">
    <text evidence="3">Zinc metalloprotease-disintegrin AAV1: snake venom zinc metalloprotease that binds to the platelet collagen receptor glycoprotein VI (GP6) thus inhibiting collagen- and convulxin- (a GP6 agonist) induced platelet aggregation and the tyrosine phosphorylation of intracellular signaling proteins (LAT, SYK, p76SLP76, PIK3C, and PLCG2) that follows GP6 activation. Interestingly, blocks platelet aggregation but does not affect shape change. Also degrades the Aalpha chain of fibrinogen (FGA), followed by the Bbeta chain (FGB).</text>
</comment>
<comment type="function">
    <text evidence="3">Disintegrin AAV1-C: 30 kDa fragment of AAV1 autoproteolysed in absence of Ca(2+) that shows more potent inhibition of convulxin-induced platelet aggregation than AAV1.</text>
</comment>
<comment type="cofactor">
    <cofactor evidence="1">
        <name>Zn(2+)</name>
        <dbReference type="ChEBI" id="CHEBI:29105"/>
    </cofactor>
    <text evidence="1">Binds 1 zinc ion per subunit.</text>
</comment>
<comment type="activity regulation">
    <text evidence="3">The proteinase activity is slightly enhanced by Ca(2+) and Mg(2+). Inhibited by EDTA and phenanthroline, but not by PMSF.</text>
</comment>
<comment type="subunit">
    <text evidence="3">Monomeric (57 kDa), and polymeric (180 kDa) forms have been detected under non-reducing conditions on SDS-PAGE, whereas only one monomeric form is observed under reducing conditions.</text>
</comment>
<comment type="subcellular location">
    <subcellularLocation>
        <location evidence="3">Secreted</location>
    </subcellularLocation>
</comment>
<comment type="tissue specificity">
    <text evidence="5">Expressed by the venom gland.</text>
</comment>
<comment type="PTM">
    <text>N-glycosylated.</text>
</comment>
<comment type="miscellaneous">
    <text evidence="5">Negative results: does not cleave glycoprotein VI (GP6), gelatin (an irreversibly hydrolyzed form of collagen), fibronectin, prothrombin, and gamma chain of fibrinogen. May not bind to alpha-2/beta-1 integrin (ITGA2/ITGB1) (PubMed:17029743).</text>
</comment>
<comment type="similarity">
    <text evidence="4">Belongs to the venom metalloproteinase (M12B) family. P-III subfamily.</text>
</comment>
<keyword id="KW-0106">Calcium</keyword>
<keyword id="KW-1217">Cell adhesion impairing toxin</keyword>
<keyword id="KW-0903">Direct protein sequencing</keyword>
<keyword id="KW-1015">Disulfide bond</keyword>
<keyword id="KW-0325">Glycoprotein</keyword>
<keyword id="KW-1199">Hemostasis impairing toxin</keyword>
<keyword id="KW-0378">Hydrolase</keyword>
<keyword id="KW-0479">Metal-binding</keyword>
<keyword id="KW-0482">Metalloprotease</keyword>
<keyword id="KW-1201">Platelet aggregation inhibiting toxin</keyword>
<keyword id="KW-0645">Protease</keyword>
<keyword id="KW-0964">Secreted</keyword>
<keyword id="KW-0800">Toxin</keyword>
<keyword id="KW-0862">Zinc</keyword>
<keyword id="KW-0865">Zymogen</keyword>
<feature type="chain" id="PRO_0000417323" description="Zinc metalloproteinase-disintegrin-like AAV1">
    <location>
        <begin position="1" status="less than"/>
        <end position="10" status="greater than"/>
    </location>
</feature>
<feature type="chain" id="PRO_0000417324" description="Disintegrin-like AAV1-C">
    <location>
        <begin position="1"/>
        <end position="10" status="greater than"/>
    </location>
</feature>
<feature type="domain" description="Disintegrin" evidence="2">
    <location>
        <begin position="5"/>
        <end position="10" status="greater than"/>
    </location>
</feature>
<feature type="binding site" evidence="1">
    <location>
        <position position="7"/>
    </location>
    <ligand>
        <name>Ca(2+)</name>
        <dbReference type="ChEBI" id="CHEBI:29108"/>
        <label>1</label>
    </ligand>
</feature>
<feature type="binding site" evidence="1">
    <location>
        <position position="10"/>
    </location>
    <ligand>
        <name>Ca(2+)</name>
        <dbReference type="ChEBI" id="CHEBI:29108"/>
        <label>1</label>
    </ligand>
</feature>
<feature type="disulfide bond">
    <location>
        <begin position="8"/>
        <end status="unknown"/>
    </location>
</feature>
<feature type="non-terminal residue">
    <location>
        <position position="1"/>
    </location>
</feature>
<feature type="non-terminal residue">
    <location>
        <position position="10"/>
    </location>
</feature>
<accession>P0DJH3</accession>
<dbReference type="EC" id="3.4.24.-"/>
<dbReference type="GO" id="GO:0005576">
    <property type="term" value="C:extracellular region"/>
    <property type="evidence" value="ECO:0007669"/>
    <property type="project" value="UniProtKB-SubCell"/>
</dbReference>
<dbReference type="GO" id="GO:0046872">
    <property type="term" value="F:metal ion binding"/>
    <property type="evidence" value="ECO:0007669"/>
    <property type="project" value="UniProtKB-KW"/>
</dbReference>
<dbReference type="GO" id="GO:0008237">
    <property type="term" value="F:metallopeptidase activity"/>
    <property type="evidence" value="ECO:0007669"/>
    <property type="project" value="UniProtKB-KW"/>
</dbReference>
<dbReference type="GO" id="GO:0090729">
    <property type="term" value="F:toxin activity"/>
    <property type="evidence" value="ECO:0007669"/>
    <property type="project" value="UniProtKB-KW"/>
</dbReference>
<dbReference type="GO" id="GO:0006508">
    <property type="term" value="P:proteolysis"/>
    <property type="evidence" value="ECO:0007669"/>
    <property type="project" value="UniProtKB-KW"/>
</dbReference>
<organism>
    <name type="scientific">Deinagkistrodon acutus</name>
    <name type="common">Hundred-pace snake</name>
    <name type="synonym">Agkistrodon acutus</name>
    <dbReference type="NCBI Taxonomy" id="36307"/>
    <lineage>
        <taxon>Eukaryota</taxon>
        <taxon>Metazoa</taxon>
        <taxon>Chordata</taxon>
        <taxon>Craniata</taxon>
        <taxon>Vertebrata</taxon>
        <taxon>Euteleostomi</taxon>
        <taxon>Lepidosauria</taxon>
        <taxon>Squamata</taxon>
        <taxon>Bifurcata</taxon>
        <taxon>Unidentata</taxon>
        <taxon>Episquamata</taxon>
        <taxon>Toxicofera</taxon>
        <taxon>Serpentes</taxon>
        <taxon>Colubroidea</taxon>
        <taxon>Viperidae</taxon>
        <taxon>Crotalinae</taxon>
        <taxon>Deinagkistrodon</taxon>
    </lineage>
</organism>
<evidence type="ECO:0000250" key="1"/>
<evidence type="ECO:0000255" key="2">
    <source>
        <dbReference type="PROSITE-ProRule" id="PRU00068"/>
    </source>
</evidence>
<evidence type="ECO:0000269" key="3">
    <source>
    </source>
</evidence>
<evidence type="ECO:0000305" key="4"/>
<evidence type="ECO:0000305" key="5">
    <source>
    </source>
</evidence>
<name>VMP3A_DEIAC</name>